<name>ECFA2_CLOTE</name>
<organism>
    <name type="scientific">Clostridium tetani (strain Massachusetts / E88)</name>
    <dbReference type="NCBI Taxonomy" id="212717"/>
    <lineage>
        <taxon>Bacteria</taxon>
        <taxon>Bacillati</taxon>
        <taxon>Bacillota</taxon>
        <taxon>Clostridia</taxon>
        <taxon>Eubacteriales</taxon>
        <taxon>Clostridiaceae</taxon>
        <taxon>Clostridium</taxon>
    </lineage>
</organism>
<feature type="chain" id="PRO_0000092002" description="Energy-coupling factor transporter ATP-binding protein EcfA2">
    <location>
        <begin position="1"/>
        <end position="288"/>
    </location>
</feature>
<feature type="domain" description="ABC transporter" evidence="1">
    <location>
        <begin position="3"/>
        <end position="245"/>
    </location>
</feature>
<feature type="binding site" evidence="1">
    <location>
        <begin position="40"/>
        <end position="47"/>
    </location>
    <ligand>
        <name>ATP</name>
        <dbReference type="ChEBI" id="CHEBI:30616"/>
    </ligand>
</feature>
<reference key="1">
    <citation type="journal article" date="2003" name="Proc. Natl. Acad. Sci. U.S.A.">
        <title>The genome sequence of Clostridium tetani, the causative agent of tetanus disease.</title>
        <authorList>
            <person name="Brueggemann H."/>
            <person name="Baeumer S."/>
            <person name="Fricke W.F."/>
            <person name="Wiezer A."/>
            <person name="Liesegang H."/>
            <person name="Decker I."/>
            <person name="Herzberg C."/>
            <person name="Martinez-Arias R."/>
            <person name="Merkl R."/>
            <person name="Henne A."/>
            <person name="Gottschalk G."/>
        </authorList>
    </citation>
    <scope>NUCLEOTIDE SEQUENCE [LARGE SCALE GENOMIC DNA]</scope>
    <source>
        <strain>Massachusetts / E88</strain>
    </source>
</reference>
<protein>
    <recommendedName>
        <fullName evidence="1">Energy-coupling factor transporter ATP-binding protein EcfA2</fullName>
        <shortName evidence="1">ECF transporter A component EcfA2</shortName>
        <ecNumber evidence="1">7.-.-.-</ecNumber>
    </recommendedName>
</protein>
<comment type="function">
    <text evidence="1">ATP-binding (A) component of a common energy-coupling factor (ECF) ABC-transporter complex. Unlike classic ABC transporters this ECF transporter provides the energy necessary to transport a number of different substrates.</text>
</comment>
<comment type="subunit">
    <text evidence="1">Forms a stable energy-coupling factor (ECF) transporter complex composed of 2 membrane-embedded substrate-binding proteins (S component), 2 ATP-binding proteins (A component) and 2 transmembrane proteins (T component).</text>
</comment>
<comment type="subcellular location">
    <subcellularLocation>
        <location evidence="1">Cell membrane</location>
        <topology evidence="1">Peripheral membrane protein</topology>
    </subcellularLocation>
</comment>
<comment type="similarity">
    <text evidence="1">Belongs to the ABC transporter superfamily. Energy-coupling factor EcfA family.</text>
</comment>
<gene>
    <name evidence="1" type="primary">ecfA2</name>
    <name type="synonym">cbiO2</name>
    <name type="ordered locus">CTC_02575</name>
</gene>
<keyword id="KW-0067">ATP-binding</keyword>
<keyword id="KW-1003">Cell membrane</keyword>
<keyword id="KW-0472">Membrane</keyword>
<keyword id="KW-0547">Nucleotide-binding</keyword>
<keyword id="KW-1185">Reference proteome</keyword>
<keyword id="KW-1278">Translocase</keyword>
<keyword id="KW-0813">Transport</keyword>
<evidence type="ECO:0000255" key="1">
    <source>
        <dbReference type="HAMAP-Rule" id="MF_01710"/>
    </source>
</evidence>
<proteinExistence type="inferred from homology"/>
<accession>Q890R3</accession>
<sequence length="288" mass="32541">MSIKIENLTHVYMQETPFEKKAIDDVNLEIKNGEFIALIGHTGSGKSTLIQHINGLLKPHSGRIIIDDIDITKKEVKMSEIRKKVGLVFQYPEYQLFEETIEKDIAFGPKNLNLSEEEINKRIKRAMNIVGLDYEKYRDKSPFELSGGQKRRVAIAGVVAMEPEVLILDEPTAGLDPKGRDEILGEIKDLHKEYNMTIILVSHSMEDVAKLATRVLVMHKGKCILDGEPSQVFNEVDTLESVGLAAPQVTYLMRSLKEKGFNISENIFTIEQAKKELLKIFNNKATNC</sequence>
<dbReference type="EC" id="7.-.-.-" evidence="1"/>
<dbReference type="EMBL" id="AE015927">
    <property type="protein sequence ID" value="AAO37032.1"/>
    <property type="molecule type" value="Genomic_DNA"/>
</dbReference>
<dbReference type="RefSeq" id="WP_011100693.1">
    <property type="nucleotide sequence ID" value="NC_004557.1"/>
</dbReference>
<dbReference type="SMR" id="Q890R3"/>
<dbReference type="STRING" id="212717.CTC_02575"/>
<dbReference type="GeneID" id="24254060"/>
<dbReference type="KEGG" id="ctc:CTC_02575"/>
<dbReference type="HOGENOM" id="CLU_000604_1_22_9"/>
<dbReference type="OrthoDB" id="9784332at2"/>
<dbReference type="Proteomes" id="UP000001412">
    <property type="component" value="Chromosome"/>
</dbReference>
<dbReference type="GO" id="GO:0043190">
    <property type="term" value="C:ATP-binding cassette (ABC) transporter complex"/>
    <property type="evidence" value="ECO:0007669"/>
    <property type="project" value="TreeGrafter"/>
</dbReference>
<dbReference type="GO" id="GO:0005524">
    <property type="term" value="F:ATP binding"/>
    <property type="evidence" value="ECO:0007669"/>
    <property type="project" value="UniProtKB-KW"/>
</dbReference>
<dbReference type="GO" id="GO:0016887">
    <property type="term" value="F:ATP hydrolysis activity"/>
    <property type="evidence" value="ECO:0007669"/>
    <property type="project" value="InterPro"/>
</dbReference>
<dbReference type="GO" id="GO:0042626">
    <property type="term" value="F:ATPase-coupled transmembrane transporter activity"/>
    <property type="evidence" value="ECO:0007669"/>
    <property type="project" value="TreeGrafter"/>
</dbReference>
<dbReference type="CDD" id="cd03225">
    <property type="entry name" value="ABC_cobalt_CbiO_domain1"/>
    <property type="match status" value="1"/>
</dbReference>
<dbReference type="FunFam" id="3.40.50.300:FF:000224">
    <property type="entry name" value="Energy-coupling factor transporter ATP-binding protein EcfA"/>
    <property type="match status" value="1"/>
</dbReference>
<dbReference type="Gene3D" id="3.40.50.300">
    <property type="entry name" value="P-loop containing nucleotide triphosphate hydrolases"/>
    <property type="match status" value="1"/>
</dbReference>
<dbReference type="InterPro" id="IPR003593">
    <property type="entry name" value="AAA+_ATPase"/>
</dbReference>
<dbReference type="InterPro" id="IPR003439">
    <property type="entry name" value="ABC_transporter-like_ATP-bd"/>
</dbReference>
<dbReference type="InterPro" id="IPR017871">
    <property type="entry name" value="ABC_transporter-like_CS"/>
</dbReference>
<dbReference type="InterPro" id="IPR015856">
    <property type="entry name" value="ABC_transpr_CbiO/EcfA_su"/>
</dbReference>
<dbReference type="InterPro" id="IPR050095">
    <property type="entry name" value="ECF_ABC_transporter_ATP-bd"/>
</dbReference>
<dbReference type="InterPro" id="IPR030946">
    <property type="entry name" value="EcfA2"/>
</dbReference>
<dbReference type="InterPro" id="IPR027417">
    <property type="entry name" value="P-loop_NTPase"/>
</dbReference>
<dbReference type="NCBIfam" id="TIGR04521">
    <property type="entry name" value="ECF_ATPase_2"/>
    <property type="match status" value="1"/>
</dbReference>
<dbReference type="NCBIfam" id="NF010158">
    <property type="entry name" value="PRK13637.1"/>
    <property type="match status" value="1"/>
</dbReference>
<dbReference type="PANTHER" id="PTHR43553:SF27">
    <property type="entry name" value="ENERGY-COUPLING FACTOR TRANSPORTER ATP-BINDING PROTEIN ECFA2"/>
    <property type="match status" value="1"/>
</dbReference>
<dbReference type="PANTHER" id="PTHR43553">
    <property type="entry name" value="HEAVY METAL TRANSPORTER"/>
    <property type="match status" value="1"/>
</dbReference>
<dbReference type="Pfam" id="PF00005">
    <property type="entry name" value="ABC_tran"/>
    <property type="match status" value="1"/>
</dbReference>
<dbReference type="SMART" id="SM00382">
    <property type="entry name" value="AAA"/>
    <property type="match status" value="1"/>
</dbReference>
<dbReference type="SUPFAM" id="SSF52540">
    <property type="entry name" value="P-loop containing nucleoside triphosphate hydrolases"/>
    <property type="match status" value="1"/>
</dbReference>
<dbReference type="PROSITE" id="PS00211">
    <property type="entry name" value="ABC_TRANSPORTER_1"/>
    <property type="match status" value="1"/>
</dbReference>
<dbReference type="PROSITE" id="PS50893">
    <property type="entry name" value="ABC_TRANSPORTER_2"/>
    <property type="match status" value="1"/>
</dbReference>
<dbReference type="PROSITE" id="PS51246">
    <property type="entry name" value="CBIO"/>
    <property type="match status" value="1"/>
</dbReference>